<sequence>MPQLDTSTWFTTILATITTLFILFQLKISKYIYPSSPELKSMKSLKHNTPWETKWTKIYSPLSLPLQ</sequence>
<organism>
    <name type="scientific">Talpa europaea</name>
    <name type="common">European mole</name>
    <dbReference type="NCBI Taxonomy" id="9375"/>
    <lineage>
        <taxon>Eukaryota</taxon>
        <taxon>Metazoa</taxon>
        <taxon>Chordata</taxon>
        <taxon>Craniata</taxon>
        <taxon>Vertebrata</taxon>
        <taxon>Euteleostomi</taxon>
        <taxon>Mammalia</taxon>
        <taxon>Eutheria</taxon>
        <taxon>Laurasiatheria</taxon>
        <taxon>Eulipotyphla</taxon>
        <taxon>Talpidae</taxon>
        <taxon>Talpa</taxon>
    </lineage>
</organism>
<geneLocation type="mitochondrion"/>
<dbReference type="EMBL" id="Y19192">
    <property type="protein sequence ID" value="CAB71163.1"/>
    <property type="molecule type" value="Genomic_DNA"/>
</dbReference>
<dbReference type="RefSeq" id="NP_037653.1">
    <property type="nucleotide sequence ID" value="NC_002391.1"/>
</dbReference>
<dbReference type="SMR" id="Q9MJB2"/>
<dbReference type="GeneID" id="808920"/>
<dbReference type="CTD" id="4509"/>
<dbReference type="GO" id="GO:0031966">
    <property type="term" value="C:mitochondrial membrane"/>
    <property type="evidence" value="ECO:0007669"/>
    <property type="project" value="UniProtKB-SubCell"/>
</dbReference>
<dbReference type="GO" id="GO:0045259">
    <property type="term" value="C:proton-transporting ATP synthase complex"/>
    <property type="evidence" value="ECO:0000250"/>
    <property type="project" value="UniProtKB"/>
</dbReference>
<dbReference type="GO" id="GO:0015078">
    <property type="term" value="F:proton transmembrane transporter activity"/>
    <property type="evidence" value="ECO:0007669"/>
    <property type="project" value="InterPro"/>
</dbReference>
<dbReference type="GO" id="GO:0015986">
    <property type="term" value="P:proton motive force-driven ATP synthesis"/>
    <property type="evidence" value="ECO:0007669"/>
    <property type="project" value="InterPro"/>
</dbReference>
<dbReference type="InterPro" id="IPR039017">
    <property type="entry name" value="ATP8_mammal"/>
</dbReference>
<dbReference type="InterPro" id="IPR001421">
    <property type="entry name" value="ATP8_metazoa"/>
</dbReference>
<dbReference type="PANTHER" id="PTHR13722">
    <property type="entry name" value="ATP SYNTHASE PROTEIN 8"/>
    <property type="match status" value="1"/>
</dbReference>
<dbReference type="PANTHER" id="PTHR13722:SF0">
    <property type="entry name" value="ATP SYNTHASE PROTEIN 8"/>
    <property type="match status" value="1"/>
</dbReference>
<dbReference type="Pfam" id="PF00895">
    <property type="entry name" value="ATP-synt_8"/>
    <property type="match status" value="1"/>
</dbReference>
<proteinExistence type="inferred from homology"/>
<name>ATP8_TALEU</name>
<feature type="chain" id="PRO_0000195591" description="ATP synthase F(0) complex subunit 8">
    <location>
        <begin position="1"/>
        <end position="67"/>
    </location>
</feature>
<feature type="transmembrane region" description="Helical" evidence="4">
    <location>
        <begin position="8"/>
        <end position="24"/>
    </location>
</feature>
<feature type="modified residue" description="N6-acetyllysine; alternate" evidence="2">
    <location>
        <position position="54"/>
    </location>
</feature>
<feature type="modified residue" description="N6-succinyllysine; alternate" evidence="2">
    <location>
        <position position="54"/>
    </location>
</feature>
<feature type="modified residue" description="N6-acetyllysine" evidence="2">
    <location>
        <position position="57"/>
    </location>
</feature>
<gene>
    <name evidence="1" type="primary">MT-ATP8</name>
    <name type="synonym">ATP8</name>
    <name type="synonym">ATPASE8</name>
    <name type="synonym">MTATP8</name>
</gene>
<evidence type="ECO:0000250" key="1">
    <source>
        <dbReference type="UniProtKB" id="P03928"/>
    </source>
</evidence>
<evidence type="ECO:0000250" key="2">
    <source>
        <dbReference type="UniProtKB" id="P03930"/>
    </source>
</evidence>
<evidence type="ECO:0000250" key="3">
    <source>
        <dbReference type="UniProtKB" id="P19483"/>
    </source>
</evidence>
<evidence type="ECO:0000255" key="4"/>
<evidence type="ECO:0000305" key="5"/>
<protein>
    <recommendedName>
        <fullName evidence="1">ATP synthase F(0) complex subunit 8</fullName>
    </recommendedName>
    <alternativeName>
        <fullName>A6L</fullName>
    </alternativeName>
    <alternativeName>
        <fullName>F-ATPase subunit 8</fullName>
    </alternativeName>
</protein>
<reference key="1">
    <citation type="journal article" date="2000" name="Mol. Biol. Evol.">
        <title>The phylogenetic position of the Talpidae within Eutheria based on analysis of complete mitochondrial sequences.</title>
        <authorList>
            <person name="Mouchaty S.K."/>
            <person name="Gullberg A."/>
            <person name="Janke A."/>
            <person name="Arnason U."/>
        </authorList>
    </citation>
    <scope>NUCLEOTIDE SEQUENCE [GENOMIC DNA]</scope>
</reference>
<comment type="function">
    <text evidence="1 3">Subunit 8, of the mitochondrial membrane ATP synthase complex (F(1)F(0) ATP synthase or Complex V) that produces ATP from ADP in the presence of a proton gradient across the membrane which is generated by electron transport complexes of the respiratory chain. ATP synthase complex consist of a soluble F(1) head domain - the catalytic core - and a membrane F(1) domain - the membrane proton channel. These two domains are linked by a central stalk rotating inside the F(1) region and a stationary peripheral stalk. During catalysis, ATP synthesis in the catalytic domain of F(1) is coupled via a rotary mechanism of the central stalk subunits to proton translocation (By similarity). In vivo, can only synthesize ATP although its ATP hydrolase activity can be activated artificially in vitro (By similarity). Part of the complex F(0) domain (By similarity).</text>
</comment>
<comment type="subunit">
    <text evidence="1">Component of the ATP synthase complex composed at least of ATP5F1A/subunit alpha, ATP5F1B/subunit beta, ATP5MC1/subunit c (homooctomer), MT-ATP6/subunit a, MT-ATP8/subunit 8, ATP5ME/subunit e, ATP5MF/subunit f, ATP5MG/subunit g, ATP5MK/subunit k, ATP5MJ/subunit j, ATP5F1C/subunit gamma, ATP5F1D/subunit delta, ATP5F1E/subunit epsilon, ATP5PF/subunit F6, ATP5PB/subunit b, ATP5PD/subunit d, ATP5PO/subunit OSCP. ATP synthase complex consists of a soluble F(1) head domain (subunits alpha(3) and beta(3)) - the catalytic core - and a membrane F(0) domain - the membrane proton channel (subunits c, a, 8, e, f, g, k and j). These two domains are linked by a central stalk (subunits gamma, delta, and epsilon) rotating inside the F1 region and a stationary peripheral stalk (subunits F6, b, d, and OSCP). Interacts with PRICKLE3.</text>
</comment>
<comment type="subcellular location">
    <subcellularLocation>
        <location>Mitochondrion membrane</location>
        <topology>Single-pass membrane protein</topology>
    </subcellularLocation>
</comment>
<comment type="similarity">
    <text evidence="5">Belongs to the ATPase protein 8 family.</text>
</comment>
<accession>Q9MJB2</accession>
<keyword id="KW-0007">Acetylation</keyword>
<keyword id="KW-0066">ATP synthesis</keyword>
<keyword id="KW-0138">CF(0)</keyword>
<keyword id="KW-0375">Hydrogen ion transport</keyword>
<keyword id="KW-0406">Ion transport</keyword>
<keyword id="KW-0472">Membrane</keyword>
<keyword id="KW-0496">Mitochondrion</keyword>
<keyword id="KW-0812">Transmembrane</keyword>
<keyword id="KW-1133">Transmembrane helix</keyword>
<keyword id="KW-0813">Transport</keyword>